<protein>
    <recommendedName>
        <fullName evidence="1">Phosphoribosylformylglycinamidine synthase subunit PurL</fullName>
        <shortName evidence="1">FGAM synthase</shortName>
        <ecNumber evidence="1">6.3.5.3</ecNumber>
    </recommendedName>
    <alternativeName>
        <fullName evidence="1">Formylglycinamide ribonucleotide amidotransferase subunit II</fullName>
        <shortName evidence="1">FGAR amidotransferase II</shortName>
        <shortName evidence="1">FGAR-AT II</shortName>
    </alternativeName>
    <alternativeName>
        <fullName evidence="1">Glutamine amidotransferase PurL</fullName>
    </alternativeName>
    <alternativeName>
        <fullName evidence="1">Phosphoribosylformylglycinamidine synthase subunit II</fullName>
    </alternativeName>
</protein>
<feature type="chain" id="PRO_1000050351" description="Phosphoribosylformylglycinamidine synthase subunit PurL">
    <location>
        <begin position="1"/>
        <end position="729"/>
    </location>
</feature>
<feature type="active site" evidence="1">
    <location>
        <position position="54"/>
    </location>
</feature>
<feature type="active site" description="Proton acceptor" evidence="1">
    <location>
        <position position="100"/>
    </location>
</feature>
<feature type="binding site" evidence="1">
    <location>
        <position position="57"/>
    </location>
    <ligand>
        <name>ATP</name>
        <dbReference type="ChEBI" id="CHEBI:30616"/>
    </ligand>
</feature>
<feature type="binding site" evidence="1">
    <location>
        <position position="96"/>
    </location>
    <ligand>
        <name>ATP</name>
        <dbReference type="ChEBI" id="CHEBI:30616"/>
    </ligand>
</feature>
<feature type="binding site" evidence="1">
    <location>
        <position position="98"/>
    </location>
    <ligand>
        <name>Mg(2+)</name>
        <dbReference type="ChEBI" id="CHEBI:18420"/>
        <label>1</label>
    </ligand>
</feature>
<feature type="binding site" evidence="1">
    <location>
        <begin position="99"/>
        <end position="102"/>
    </location>
    <ligand>
        <name>substrate</name>
    </ligand>
</feature>
<feature type="binding site" evidence="1">
    <location>
        <position position="121"/>
    </location>
    <ligand>
        <name>substrate</name>
    </ligand>
</feature>
<feature type="binding site" evidence="1">
    <location>
        <position position="122"/>
    </location>
    <ligand>
        <name>Mg(2+)</name>
        <dbReference type="ChEBI" id="CHEBI:18420"/>
        <label>2</label>
    </ligand>
</feature>
<feature type="binding site" evidence="1">
    <location>
        <position position="245"/>
    </location>
    <ligand>
        <name>substrate</name>
    </ligand>
</feature>
<feature type="binding site" evidence="1">
    <location>
        <position position="273"/>
    </location>
    <ligand>
        <name>Mg(2+)</name>
        <dbReference type="ChEBI" id="CHEBI:18420"/>
        <label>2</label>
    </ligand>
</feature>
<feature type="binding site" evidence="1">
    <location>
        <begin position="317"/>
        <end position="319"/>
    </location>
    <ligand>
        <name>substrate</name>
    </ligand>
</feature>
<feature type="binding site" evidence="1">
    <location>
        <position position="495"/>
    </location>
    <ligand>
        <name>ATP</name>
        <dbReference type="ChEBI" id="CHEBI:30616"/>
    </ligand>
</feature>
<feature type="binding site" evidence="1">
    <location>
        <position position="532"/>
    </location>
    <ligand>
        <name>ATP</name>
        <dbReference type="ChEBI" id="CHEBI:30616"/>
    </ligand>
</feature>
<feature type="binding site" evidence="1">
    <location>
        <position position="533"/>
    </location>
    <ligand>
        <name>Mg(2+)</name>
        <dbReference type="ChEBI" id="CHEBI:18420"/>
        <label>1</label>
    </ligand>
</feature>
<feature type="binding site" evidence="1">
    <location>
        <position position="535"/>
    </location>
    <ligand>
        <name>substrate</name>
    </ligand>
</feature>
<dbReference type="EC" id="6.3.5.3" evidence="1"/>
<dbReference type="EMBL" id="CP000253">
    <property type="protein sequence ID" value="ABD30135.1"/>
    <property type="molecule type" value="Genomic_DNA"/>
</dbReference>
<dbReference type="RefSeq" id="WP_000032727.1">
    <property type="nucleotide sequence ID" value="NZ_LS483365.1"/>
</dbReference>
<dbReference type="RefSeq" id="YP_499563.1">
    <property type="nucleotide sequence ID" value="NC_007795.1"/>
</dbReference>
<dbReference type="SMR" id="Q2FZJ0"/>
<dbReference type="STRING" id="93061.SAOUHSC_01013"/>
<dbReference type="PaxDb" id="1280-SAXN108_1066"/>
<dbReference type="GeneID" id="3920274"/>
<dbReference type="KEGG" id="sao:SAOUHSC_01013"/>
<dbReference type="PATRIC" id="fig|93061.5.peg.928"/>
<dbReference type="eggNOG" id="COG0046">
    <property type="taxonomic scope" value="Bacteria"/>
</dbReference>
<dbReference type="HOGENOM" id="CLU_003100_0_1_9"/>
<dbReference type="OrthoDB" id="9804441at2"/>
<dbReference type="UniPathway" id="UPA00074">
    <property type="reaction ID" value="UER00128"/>
</dbReference>
<dbReference type="PRO" id="PR:Q2FZJ0"/>
<dbReference type="Proteomes" id="UP000008816">
    <property type="component" value="Chromosome"/>
</dbReference>
<dbReference type="GO" id="GO:0005737">
    <property type="term" value="C:cytoplasm"/>
    <property type="evidence" value="ECO:0007669"/>
    <property type="project" value="UniProtKB-SubCell"/>
</dbReference>
<dbReference type="GO" id="GO:0005524">
    <property type="term" value="F:ATP binding"/>
    <property type="evidence" value="ECO:0007669"/>
    <property type="project" value="UniProtKB-UniRule"/>
</dbReference>
<dbReference type="GO" id="GO:0000287">
    <property type="term" value="F:magnesium ion binding"/>
    <property type="evidence" value="ECO:0007669"/>
    <property type="project" value="UniProtKB-UniRule"/>
</dbReference>
<dbReference type="GO" id="GO:0004642">
    <property type="term" value="F:phosphoribosylformylglycinamidine synthase activity"/>
    <property type="evidence" value="ECO:0000318"/>
    <property type="project" value="GO_Central"/>
</dbReference>
<dbReference type="GO" id="GO:0006189">
    <property type="term" value="P:'de novo' IMP biosynthetic process"/>
    <property type="evidence" value="ECO:0007669"/>
    <property type="project" value="UniProtKB-UniRule"/>
</dbReference>
<dbReference type="GO" id="GO:0006164">
    <property type="term" value="P:purine nucleotide biosynthetic process"/>
    <property type="evidence" value="ECO:0000318"/>
    <property type="project" value="GO_Central"/>
</dbReference>
<dbReference type="CDD" id="cd02203">
    <property type="entry name" value="PurL_repeat1"/>
    <property type="match status" value="1"/>
</dbReference>
<dbReference type="CDD" id="cd02204">
    <property type="entry name" value="PurL_repeat2"/>
    <property type="match status" value="1"/>
</dbReference>
<dbReference type="FunFam" id="3.30.1330.10:FF:000004">
    <property type="entry name" value="Phosphoribosylformylglycinamidine synthase subunit PurL"/>
    <property type="match status" value="1"/>
</dbReference>
<dbReference type="Gene3D" id="3.90.650.10">
    <property type="entry name" value="PurM-like C-terminal domain"/>
    <property type="match status" value="2"/>
</dbReference>
<dbReference type="Gene3D" id="3.30.1330.10">
    <property type="entry name" value="PurM-like, N-terminal domain"/>
    <property type="match status" value="2"/>
</dbReference>
<dbReference type="HAMAP" id="MF_00420">
    <property type="entry name" value="PurL_2"/>
    <property type="match status" value="1"/>
</dbReference>
<dbReference type="InterPro" id="IPR010074">
    <property type="entry name" value="PRibForGlyAmidine_synth_PurL"/>
</dbReference>
<dbReference type="InterPro" id="IPR041609">
    <property type="entry name" value="PurL_linker"/>
</dbReference>
<dbReference type="InterPro" id="IPR010918">
    <property type="entry name" value="PurM-like_C_dom"/>
</dbReference>
<dbReference type="InterPro" id="IPR036676">
    <property type="entry name" value="PurM-like_C_sf"/>
</dbReference>
<dbReference type="InterPro" id="IPR016188">
    <property type="entry name" value="PurM-like_N"/>
</dbReference>
<dbReference type="InterPro" id="IPR036921">
    <property type="entry name" value="PurM-like_N_sf"/>
</dbReference>
<dbReference type="NCBIfam" id="TIGR01736">
    <property type="entry name" value="FGAM_synth_II"/>
    <property type="match status" value="1"/>
</dbReference>
<dbReference type="NCBIfam" id="NF002290">
    <property type="entry name" value="PRK01213.1"/>
    <property type="match status" value="1"/>
</dbReference>
<dbReference type="PANTHER" id="PTHR43555">
    <property type="entry name" value="PHOSPHORIBOSYLFORMYLGLYCINAMIDINE SYNTHASE SUBUNIT PURL"/>
    <property type="match status" value="1"/>
</dbReference>
<dbReference type="PANTHER" id="PTHR43555:SF1">
    <property type="entry name" value="PHOSPHORIBOSYLFORMYLGLYCINAMIDINE SYNTHASE SUBUNIT PURL"/>
    <property type="match status" value="1"/>
</dbReference>
<dbReference type="Pfam" id="PF00586">
    <property type="entry name" value="AIRS"/>
    <property type="match status" value="2"/>
</dbReference>
<dbReference type="Pfam" id="PF02769">
    <property type="entry name" value="AIRS_C"/>
    <property type="match status" value="1"/>
</dbReference>
<dbReference type="Pfam" id="PF18072">
    <property type="entry name" value="FGAR-AT_linker"/>
    <property type="match status" value="1"/>
</dbReference>
<dbReference type="PIRSF" id="PIRSF001587">
    <property type="entry name" value="FGAM_synthase_II"/>
    <property type="match status" value="1"/>
</dbReference>
<dbReference type="SUPFAM" id="SSF56042">
    <property type="entry name" value="PurM C-terminal domain-like"/>
    <property type="match status" value="2"/>
</dbReference>
<dbReference type="SUPFAM" id="SSF55326">
    <property type="entry name" value="PurM N-terminal domain-like"/>
    <property type="match status" value="2"/>
</dbReference>
<organism>
    <name type="scientific">Staphylococcus aureus (strain NCTC 8325 / PS 47)</name>
    <dbReference type="NCBI Taxonomy" id="93061"/>
    <lineage>
        <taxon>Bacteria</taxon>
        <taxon>Bacillati</taxon>
        <taxon>Bacillota</taxon>
        <taxon>Bacilli</taxon>
        <taxon>Bacillales</taxon>
        <taxon>Staphylococcaceae</taxon>
        <taxon>Staphylococcus</taxon>
    </lineage>
</organism>
<proteinExistence type="inferred from homology"/>
<name>PURL_STAA8</name>
<sequence>MSKFIEPSVEEIKLEKVYQDMGLSDQEYEKVCDILGRQPNFTETGIFSVMWSEHCSYKHSKPFLKQFPTSGDHVLMGPGEGAGVVDIGDNQAVVFKVESHNHPSAIEPYQGAATGVGGIIRDIVSIGARPINLLNSLRFGELDNKQNQRLLKGVVKGIGGYGNCIGIPTTAGEIEFDERYDGNPLVNAMCVGVINHDMIQKGTAKGVGNSVIYVGLKTGRDGIHGATFASEELTEESESKRPSVQIGDPFVGKKLMEATLEAITFDELVGIQDMGAAGLTSSSSEMAAKGGSGLHLRLEQVPTREPGISPYEMMLSETQERMLLVVEKGTEQKFLDLFDKHELDSAVIGEVTDTNRFVLTYDDEVYADIPVEPLADEAPVYILEGEEKDYNTSKNDYTHIDVKDTFFKLLKHPTIASKHYLYDQYDQQVGANTIIKPGLQASVVRVEGTNKAIASTIDGEARYVYNNPYEGGKMVVAEAYRNLIAVGATPLAMTDCLNYGSPEKKEIYQQLIDSTKGMAEACDILKTPVVSGNVSLYNETKGTSIFPTPVVGMVGLIENVNYLNDFEPQVGDKLYLIGDTKDDFGGSQLEKLIYGKVNHEFESLDLSSEVEKGESIKTAIREGLLSHVQTVGKGGLLITLAKLSAHYGLGLKSSIDITNAQLFSETQGRYVVSVKSGKTLNIDNAIEIGLLTDSDNFKVTTPYTEISENVSDIKQIWEGAIAQCLTTQD</sequence>
<evidence type="ECO:0000255" key="1">
    <source>
        <dbReference type="HAMAP-Rule" id="MF_00420"/>
    </source>
</evidence>
<keyword id="KW-0067">ATP-binding</keyword>
<keyword id="KW-0963">Cytoplasm</keyword>
<keyword id="KW-0436">Ligase</keyword>
<keyword id="KW-0460">Magnesium</keyword>
<keyword id="KW-0479">Metal-binding</keyword>
<keyword id="KW-0547">Nucleotide-binding</keyword>
<keyword id="KW-0658">Purine biosynthesis</keyword>
<keyword id="KW-1185">Reference proteome</keyword>
<gene>
    <name evidence="1" type="primary">purL</name>
    <name type="ordered locus">SAOUHSC_01013</name>
</gene>
<comment type="function">
    <text evidence="1">Part of the phosphoribosylformylglycinamidine synthase complex involved in the purines biosynthetic pathway. Catalyzes the ATP-dependent conversion of formylglycinamide ribonucleotide (FGAR) and glutamine to yield formylglycinamidine ribonucleotide (FGAM) and glutamate. The FGAM synthase complex is composed of three subunits. PurQ produces an ammonia molecule by converting glutamine to glutamate. PurL transfers the ammonia molecule to FGAR to form FGAM in an ATP-dependent manner. PurS interacts with PurQ and PurL and is thought to assist in the transfer of the ammonia molecule from PurQ to PurL.</text>
</comment>
<comment type="catalytic activity">
    <reaction evidence="1">
        <text>N(2)-formyl-N(1)-(5-phospho-beta-D-ribosyl)glycinamide + L-glutamine + ATP + H2O = 2-formamido-N(1)-(5-O-phospho-beta-D-ribosyl)acetamidine + L-glutamate + ADP + phosphate + H(+)</text>
        <dbReference type="Rhea" id="RHEA:17129"/>
        <dbReference type="ChEBI" id="CHEBI:15377"/>
        <dbReference type="ChEBI" id="CHEBI:15378"/>
        <dbReference type="ChEBI" id="CHEBI:29985"/>
        <dbReference type="ChEBI" id="CHEBI:30616"/>
        <dbReference type="ChEBI" id="CHEBI:43474"/>
        <dbReference type="ChEBI" id="CHEBI:58359"/>
        <dbReference type="ChEBI" id="CHEBI:147286"/>
        <dbReference type="ChEBI" id="CHEBI:147287"/>
        <dbReference type="ChEBI" id="CHEBI:456216"/>
        <dbReference type="EC" id="6.3.5.3"/>
    </reaction>
</comment>
<comment type="pathway">
    <text evidence="1">Purine metabolism; IMP biosynthesis via de novo pathway; 5-amino-1-(5-phospho-D-ribosyl)imidazole from N(2)-formyl-N(1)-(5-phospho-D-ribosyl)glycinamide: step 1/2.</text>
</comment>
<comment type="subunit">
    <text evidence="1">Monomer. Part of the FGAM synthase complex composed of 1 PurL, 1 PurQ and 2 PurS subunits.</text>
</comment>
<comment type="subcellular location">
    <subcellularLocation>
        <location evidence="1">Cytoplasm</location>
    </subcellularLocation>
</comment>
<comment type="similarity">
    <text evidence="1">Belongs to the FGAMS family.</text>
</comment>
<accession>Q2FZJ0</accession>
<reference key="1">
    <citation type="book" date="2006" name="Gram positive pathogens, 2nd edition">
        <title>The Staphylococcus aureus NCTC 8325 genome.</title>
        <editorList>
            <person name="Fischetti V."/>
            <person name="Novick R."/>
            <person name="Ferretti J."/>
            <person name="Portnoy D."/>
            <person name="Rood J."/>
        </editorList>
        <authorList>
            <person name="Gillaspy A.F."/>
            <person name="Worrell V."/>
            <person name="Orvis J."/>
            <person name="Roe B.A."/>
            <person name="Dyer D.W."/>
            <person name="Iandolo J.J."/>
        </authorList>
    </citation>
    <scope>NUCLEOTIDE SEQUENCE [LARGE SCALE GENOMIC DNA]</scope>
    <source>
        <strain>NCTC 8325 / PS 47</strain>
    </source>
</reference>